<proteinExistence type="evidence at protein level"/>
<accession>F1SY62</accession>
<feature type="chain" id="PRO_0000451350" description="Cytochrome P450 monooxygenase 58">
    <location>
        <begin position="1"/>
        <end position="526"/>
    </location>
</feature>
<feature type="transmembrane region" description="Helical" evidence="2">
    <location>
        <begin position="13"/>
        <end position="33"/>
    </location>
</feature>
<feature type="transmembrane region" description="Helical" evidence="2">
    <location>
        <begin position="115"/>
        <end position="135"/>
    </location>
</feature>
<feature type="transmembrane region" description="Helical" evidence="2">
    <location>
        <begin position="306"/>
        <end position="326"/>
    </location>
</feature>
<feature type="binding site" description="axial binding residue" evidence="1">
    <location>
        <position position="451"/>
    </location>
    <ligand>
        <name>heme</name>
        <dbReference type="ChEBI" id="CHEBI:30413"/>
    </ligand>
    <ligandPart>
        <name>Fe</name>
        <dbReference type="ChEBI" id="CHEBI:18248"/>
    </ligandPart>
</feature>
<evidence type="ECO:0000250" key="1">
    <source>
        <dbReference type="UniProtKB" id="P04798"/>
    </source>
</evidence>
<evidence type="ECO:0000255" key="2"/>
<evidence type="ECO:0000269" key="3">
    <source>
    </source>
</evidence>
<evidence type="ECO:0000303" key="4">
    <source>
    </source>
</evidence>
<evidence type="ECO:0000303" key="5">
    <source>
    </source>
</evidence>
<evidence type="ECO:0000305" key="6"/>
<evidence type="ECO:0000305" key="7">
    <source>
    </source>
</evidence>
<name>CY058_POSPM</name>
<sequence length="526" mass="58894">MPASFLASLRAWIASSTIGQRILLALALGLLLITARVISKSKGTMPPGPRGLPLLGNIFQLPKLPWYRFTEWKEEFGPIFSLNFAGTPVVVLNSHEVVGDLLERKSTIYSDRPRFIMAGEILTGGMLIVFTGYGKVWRKLRRAGQEGLNVRASEKYQPLQESEARLLTTNMLREPAEWDAHLQRAAASSIASAVYAWPPLTKSDDGLVHRIDELMRRLVMAGLPGRYLVEIFPIMKHLPTWMAKWKREGLEWHRRDTEMFEGFYDNVARFMASGKYKPSLTAGLIERQEKNGLSKKEVSWLAGTMIGAGAETTAASLSVFMLAMTLYPDVMRKAQAEIDALVGRERMPTFADRPHLPYVCALVKEVLRWRPVGPVGVPRRTSEDDWYKGYFIPKGTLVIANVWAMNRDPAIYPDYDEFRPDRFLDASGNEIDIAGTHGQGHVTYGFGRRICIGMHVANQALFIDIAALLWAFNIEAPTGPDGNPILPSRTDFVDEGLVFRPAAFRCKVTPRIDDVATMLATLEKNA</sequence>
<comment type="function">
    <text evidence="3">Cytochrome P450 monooxygenase that is able to use delta(6)-protoilludene as a substrate to produce delta(6)-protoilludene-8-ol.</text>
</comment>
<comment type="cofactor">
    <cofactor evidence="1">
        <name>heme</name>
        <dbReference type="ChEBI" id="CHEBI:30413"/>
    </cofactor>
</comment>
<comment type="pathway">
    <text evidence="6">Secondary metabolite biosynthesis.</text>
</comment>
<comment type="subcellular location">
    <subcellularLocation>
        <location evidence="2">Membrane</location>
        <topology evidence="2">Multi-pass membrane protein</topology>
    </subcellularLocation>
</comment>
<comment type="similarity">
    <text evidence="6">Belongs to the cytochrome P450 family.</text>
</comment>
<protein>
    <recommendedName>
        <fullName evidence="4">Cytochrome P450 monooxygenase 58</fullName>
        <ecNumber evidence="7">1.-.-.-</ecNumber>
    </recommendedName>
</protein>
<keyword id="KW-0349">Heme</keyword>
<keyword id="KW-0408">Iron</keyword>
<keyword id="KW-0472">Membrane</keyword>
<keyword id="KW-0479">Metal-binding</keyword>
<keyword id="KW-0503">Monooxygenase</keyword>
<keyword id="KW-0560">Oxidoreductase</keyword>
<keyword id="KW-0812">Transmembrane</keyword>
<keyword id="KW-1133">Transmembrane helix</keyword>
<dbReference type="EC" id="1.-.-.-" evidence="7"/>
<dbReference type="EMBL" id="AB573273">
    <property type="protein sequence ID" value="BAK09406.1"/>
    <property type="molecule type" value="mRNA"/>
</dbReference>
<dbReference type="SMR" id="F1SY62"/>
<dbReference type="GO" id="GO:0016020">
    <property type="term" value="C:membrane"/>
    <property type="evidence" value="ECO:0007669"/>
    <property type="project" value="UniProtKB-SubCell"/>
</dbReference>
<dbReference type="GO" id="GO:0020037">
    <property type="term" value="F:heme binding"/>
    <property type="evidence" value="ECO:0007669"/>
    <property type="project" value="InterPro"/>
</dbReference>
<dbReference type="GO" id="GO:0005506">
    <property type="term" value="F:iron ion binding"/>
    <property type="evidence" value="ECO:0007669"/>
    <property type="project" value="InterPro"/>
</dbReference>
<dbReference type="GO" id="GO:0004497">
    <property type="term" value="F:monooxygenase activity"/>
    <property type="evidence" value="ECO:0007669"/>
    <property type="project" value="UniProtKB-KW"/>
</dbReference>
<dbReference type="GO" id="GO:0016705">
    <property type="term" value="F:oxidoreductase activity, acting on paired donors, with incorporation or reduction of molecular oxygen"/>
    <property type="evidence" value="ECO:0007669"/>
    <property type="project" value="InterPro"/>
</dbReference>
<dbReference type="CDD" id="cd11065">
    <property type="entry name" value="CYP64-like"/>
    <property type="match status" value="1"/>
</dbReference>
<dbReference type="Gene3D" id="1.10.630.10">
    <property type="entry name" value="Cytochrome P450"/>
    <property type="match status" value="1"/>
</dbReference>
<dbReference type="InterPro" id="IPR001128">
    <property type="entry name" value="Cyt_P450"/>
</dbReference>
<dbReference type="InterPro" id="IPR002401">
    <property type="entry name" value="Cyt_P450_E_grp-I"/>
</dbReference>
<dbReference type="InterPro" id="IPR036396">
    <property type="entry name" value="Cyt_P450_sf"/>
</dbReference>
<dbReference type="InterPro" id="IPR050364">
    <property type="entry name" value="Cytochrome_P450_fung"/>
</dbReference>
<dbReference type="PANTHER" id="PTHR46300:SF2">
    <property type="entry name" value="CYTOCHROME P450 MONOOXYGENASE ALNH-RELATED"/>
    <property type="match status" value="1"/>
</dbReference>
<dbReference type="PANTHER" id="PTHR46300">
    <property type="entry name" value="P450, PUTATIVE (EUROFUNG)-RELATED-RELATED"/>
    <property type="match status" value="1"/>
</dbReference>
<dbReference type="Pfam" id="PF00067">
    <property type="entry name" value="p450"/>
    <property type="match status" value="1"/>
</dbReference>
<dbReference type="PRINTS" id="PR00463">
    <property type="entry name" value="EP450I"/>
</dbReference>
<dbReference type="PRINTS" id="PR00385">
    <property type="entry name" value="P450"/>
</dbReference>
<dbReference type="SUPFAM" id="SSF48264">
    <property type="entry name" value="Cytochrome P450"/>
    <property type="match status" value="1"/>
</dbReference>
<gene>
    <name evidence="5" type="primary">CYP058</name>
    <name evidence="5" type="synonym">CYP5344B1</name>
    <name evidence="4" type="synonym">CYP5344B1v1</name>
</gene>
<reference key="1">
    <citation type="journal article" date="2012" name="Arch. Microbiol.">
        <title>Molecular identification and functional characterization of cytochrome P450 monooxygenases from the brown-rot basidiomycete Postia placenta.</title>
        <authorList>
            <person name="Ide M."/>
            <person name="Ichinose H."/>
            <person name="Wariishi H."/>
        </authorList>
    </citation>
    <scope>NUCLEOTIDE SEQUENCE [MRNA]</scope>
    <scope>IDENTIFICATION</scope>
    <source>
        <strain>ATCC 44394 / Madison 698-R</strain>
    </source>
</reference>
<reference key="2">
    <citation type="journal article" date="2018" name="Microb. Biotechnol.">
        <title>Insight into metabolic diversity of the brown-rot basidiomycete Postia placenta responsible for sesquiterpene biosynthesis: semi-comprehensive screening of cytochrome P450 monooxygenase involved in protoilludene metabolism.</title>
        <authorList>
            <person name="Ichinose H."/>
            <person name="Kitaoka T."/>
        </authorList>
    </citation>
    <scope>FUNCTION</scope>
    <scope>CATALYTIC ACTIVITY</scope>
    <source>
        <strain>ATCC 44394 / Madison 698-R</strain>
    </source>
</reference>
<organism>
    <name type="scientific">Postia placenta (strain ATCC 44394 / Madison 698-R)</name>
    <name type="common">Brown rot fungus</name>
    <name type="synonym">Poria monticola</name>
    <dbReference type="NCBI Taxonomy" id="561896"/>
    <lineage>
        <taxon>Eukaryota</taxon>
        <taxon>Fungi</taxon>
        <taxon>Dikarya</taxon>
        <taxon>Basidiomycota</taxon>
        <taxon>Agaricomycotina</taxon>
        <taxon>Agaricomycetes</taxon>
        <taxon>Polyporales</taxon>
        <taxon>Adustoporiaceae</taxon>
        <taxon>Rhodonia</taxon>
    </lineage>
</organism>